<feature type="chain" id="PRO_0000365689" description="Adenylate kinase">
    <location>
        <begin position="1"/>
        <end position="223"/>
    </location>
</feature>
<feature type="region of interest" description="NMP" evidence="1">
    <location>
        <begin position="37"/>
        <end position="66"/>
    </location>
</feature>
<feature type="region of interest" description="LID" evidence="1">
    <location>
        <begin position="134"/>
        <end position="171"/>
    </location>
</feature>
<feature type="binding site" evidence="1">
    <location>
        <begin position="17"/>
        <end position="22"/>
    </location>
    <ligand>
        <name>ATP</name>
        <dbReference type="ChEBI" id="CHEBI:30616"/>
    </ligand>
</feature>
<feature type="binding site" evidence="1">
    <location>
        <position position="38"/>
    </location>
    <ligand>
        <name>AMP</name>
        <dbReference type="ChEBI" id="CHEBI:456215"/>
    </ligand>
</feature>
<feature type="binding site" evidence="1">
    <location>
        <position position="43"/>
    </location>
    <ligand>
        <name>AMP</name>
        <dbReference type="ChEBI" id="CHEBI:456215"/>
    </ligand>
</feature>
<feature type="binding site" evidence="1">
    <location>
        <begin position="64"/>
        <end position="66"/>
    </location>
    <ligand>
        <name>AMP</name>
        <dbReference type="ChEBI" id="CHEBI:456215"/>
    </ligand>
</feature>
<feature type="binding site" evidence="1">
    <location>
        <begin position="93"/>
        <end position="96"/>
    </location>
    <ligand>
        <name>AMP</name>
        <dbReference type="ChEBI" id="CHEBI:456215"/>
    </ligand>
</feature>
<feature type="binding site" evidence="1">
    <location>
        <position position="100"/>
    </location>
    <ligand>
        <name>AMP</name>
        <dbReference type="ChEBI" id="CHEBI:456215"/>
    </ligand>
</feature>
<feature type="binding site" evidence="1">
    <location>
        <position position="135"/>
    </location>
    <ligand>
        <name>ATP</name>
        <dbReference type="ChEBI" id="CHEBI:30616"/>
    </ligand>
</feature>
<feature type="binding site" evidence="1">
    <location>
        <begin position="144"/>
        <end position="145"/>
    </location>
    <ligand>
        <name>ATP</name>
        <dbReference type="ChEBI" id="CHEBI:30616"/>
    </ligand>
</feature>
<feature type="binding site" evidence="1">
    <location>
        <position position="168"/>
    </location>
    <ligand>
        <name>AMP</name>
        <dbReference type="ChEBI" id="CHEBI:456215"/>
    </ligand>
</feature>
<feature type="binding site" evidence="1">
    <location>
        <position position="179"/>
    </location>
    <ligand>
        <name>AMP</name>
        <dbReference type="ChEBI" id="CHEBI:456215"/>
    </ligand>
</feature>
<feature type="binding site" evidence="1">
    <location>
        <position position="207"/>
    </location>
    <ligand>
        <name>ATP</name>
        <dbReference type="ChEBI" id="CHEBI:30616"/>
    </ligand>
</feature>
<protein>
    <recommendedName>
        <fullName evidence="1">Adenylate kinase</fullName>
        <ecNumber evidence="1">2.7.4.3</ecNumber>
    </recommendedName>
    <alternativeName>
        <fullName evidence="1">ATP-AMP transphosphorylase</fullName>
    </alternativeName>
    <alternativeName>
        <fullName evidence="1">ATP:AMP phosphotransferase</fullName>
    </alternativeName>
    <alternativeName>
        <fullName evidence="1">Adenylate kinase cytosolic and mitochondrial</fullName>
    </alternativeName>
    <alternativeName>
        <fullName evidence="1">Adenylate monophosphate kinase</fullName>
    </alternativeName>
</protein>
<name>KAD2_VANPO</name>
<comment type="function">
    <text evidence="1">Catalyzes the reversible transfer of the terminal phosphate group between ATP and AMP. Plays an important role in cellular energy homeostasis and in adenine nucleotide metabolism. Adenylate kinase activity is critical for regulation of the phosphate utilization and the AMP de novo biosynthesis pathways.</text>
</comment>
<comment type="catalytic activity">
    <reaction evidence="1">
        <text>AMP + ATP = 2 ADP</text>
        <dbReference type="Rhea" id="RHEA:12973"/>
        <dbReference type="ChEBI" id="CHEBI:30616"/>
        <dbReference type="ChEBI" id="CHEBI:456215"/>
        <dbReference type="ChEBI" id="CHEBI:456216"/>
        <dbReference type="EC" id="2.7.4.3"/>
    </reaction>
</comment>
<comment type="subunit">
    <text evidence="1">Monomer.</text>
</comment>
<comment type="subcellular location">
    <subcellularLocation>
        <location evidence="1">Cytoplasm</location>
        <location evidence="1">Cytosol</location>
    </subcellularLocation>
    <subcellularLocation>
        <location evidence="1">Mitochondrion intermembrane space</location>
    </subcellularLocation>
    <text evidence="1">Predominantly mitochondrial.</text>
</comment>
<comment type="domain">
    <text evidence="1">Consists of three domains, a large central CORE domain and two small peripheral domains, NMPbind and LID, which undergo movements during catalysis. The LID domain closes over the site of phosphoryl transfer upon ATP binding. Assembling and dissambling the active center during each catalytic cycle provides an effective means to prevent ATP hydrolysis.</text>
</comment>
<comment type="similarity">
    <text evidence="1">Belongs to the adenylate kinase family. AK2 subfamily.</text>
</comment>
<reference key="1">
    <citation type="journal article" date="2007" name="Proc. Natl. Acad. Sci. U.S.A.">
        <title>Independent sorting-out of thousands of duplicated gene pairs in two yeast species descended from a whole-genome duplication.</title>
        <authorList>
            <person name="Scannell D.R."/>
            <person name="Frank A.C."/>
            <person name="Conant G.C."/>
            <person name="Byrne K.P."/>
            <person name="Woolfit M."/>
            <person name="Wolfe K.H."/>
        </authorList>
    </citation>
    <scope>NUCLEOTIDE SEQUENCE [LARGE SCALE GENOMIC DNA]</scope>
    <source>
        <strain>ATCC 22028 / DSM 70294 / BCRC 21397 / CBS 2163 / NBRC 10782 / NRRL Y-8283 / UCD 57-17</strain>
    </source>
</reference>
<organism>
    <name type="scientific">Vanderwaltozyma polyspora (strain ATCC 22028 / DSM 70294 / BCRC 21397 / CBS 2163 / NBRC 10782 / NRRL Y-8283 / UCD 57-17)</name>
    <name type="common">Kluyveromyces polysporus</name>
    <dbReference type="NCBI Taxonomy" id="436907"/>
    <lineage>
        <taxon>Eukaryota</taxon>
        <taxon>Fungi</taxon>
        <taxon>Dikarya</taxon>
        <taxon>Ascomycota</taxon>
        <taxon>Saccharomycotina</taxon>
        <taxon>Saccharomycetes</taxon>
        <taxon>Saccharomycetales</taxon>
        <taxon>Saccharomycetaceae</taxon>
        <taxon>Vanderwaltozyma</taxon>
    </lineage>
</organism>
<proteinExistence type="inferred from homology"/>
<evidence type="ECO:0000255" key="1">
    <source>
        <dbReference type="HAMAP-Rule" id="MF_03168"/>
    </source>
</evidence>
<dbReference type="EC" id="2.7.4.3" evidence="1"/>
<dbReference type="EMBL" id="DS480393">
    <property type="protein sequence ID" value="EDO18147.1"/>
    <property type="molecule type" value="Genomic_DNA"/>
</dbReference>
<dbReference type="RefSeq" id="XP_001646005.1">
    <property type="nucleotide sequence ID" value="XM_001645955.1"/>
</dbReference>
<dbReference type="SMR" id="A7THY5"/>
<dbReference type="FunCoup" id="A7THY5">
    <property type="interactions" value="879"/>
</dbReference>
<dbReference type="STRING" id="436907.A7THY5"/>
<dbReference type="GeneID" id="5546420"/>
<dbReference type="KEGG" id="vpo:Kpol_1031p54"/>
<dbReference type="eggNOG" id="KOG3078">
    <property type="taxonomic scope" value="Eukaryota"/>
</dbReference>
<dbReference type="HOGENOM" id="CLU_032354_1_0_1"/>
<dbReference type="InParanoid" id="A7THY5"/>
<dbReference type="OMA" id="VYHEQTA"/>
<dbReference type="OrthoDB" id="439792at2759"/>
<dbReference type="PhylomeDB" id="A7THY5"/>
<dbReference type="Proteomes" id="UP000000267">
    <property type="component" value="Unassembled WGS sequence"/>
</dbReference>
<dbReference type="GO" id="GO:0005829">
    <property type="term" value="C:cytosol"/>
    <property type="evidence" value="ECO:0007669"/>
    <property type="project" value="UniProtKB-SubCell"/>
</dbReference>
<dbReference type="GO" id="GO:0005758">
    <property type="term" value="C:mitochondrial intermembrane space"/>
    <property type="evidence" value="ECO:0007669"/>
    <property type="project" value="UniProtKB-SubCell"/>
</dbReference>
<dbReference type="GO" id="GO:0004017">
    <property type="term" value="F:adenylate kinase activity"/>
    <property type="evidence" value="ECO:0007669"/>
    <property type="project" value="UniProtKB-UniRule"/>
</dbReference>
<dbReference type="GO" id="GO:0016208">
    <property type="term" value="F:AMP binding"/>
    <property type="evidence" value="ECO:0007669"/>
    <property type="project" value="EnsemblFungi"/>
</dbReference>
<dbReference type="GO" id="GO:0005524">
    <property type="term" value="F:ATP binding"/>
    <property type="evidence" value="ECO:0007669"/>
    <property type="project" value="UniProtKB-KW"/>
</dbReference>
<dbReference type="GO" id="GO:0003688">
    <property type="term" value="F:DNA replication origin binding"/>
    <property type="evidence" value="ECO:0007669"/>
    <property type="project" value="EnsemblFungi"/>
</dbReference>
<dbReference type="GO" id="GO:0006172">
    <property type="term" value="P:ADP biosynthetic process"/>
    <property type="evidence" value="ECO:0007669"/>
    <property type="project" value="UniProtKB-UniRule"/>
</dbReference>
<dbReference type="GO" id="GO:0046033">
    <property type="term" value="P:AMP metabolic process"/>
    <property type="evidence" value="ECO:0007669"/>
    <property type="project" value="UniProtKB-UniRule"/>
</dbReference>
<dbReference type="GO" id="GO:0046034">
    <property type="term" value="P:ATP metabolic process"/>
    <property type="evidence" value="ECO:0007669"/>
    <property type="project" value="UniProtKB-UniRule"/>
</dbReference>
<dbReference type="GO" id="GO:0006270">
    <property type="term" value="P:DNA replication initiation"/>
    <property type="evidence" value="ECO:0007669"/>
    <property type="project" value="EnsemblFungi"/>
</dbReference>
<dbReference type="GO" id="GO:0036388">
    <property type="term" value="P:pre-replicative complex assembly"/>
    <property type="evidence" value="ECO:0007669"/>
    <property type="project" value="EnsemblFungi"/>
</dbReference>
<dbReference type="CDD" id="cd01428">
    <property type="entry name" value="ADK"/>
    <property type="match status" value="1"/>
</dbReference>
<dbReference type="FunFam" id="3.40.50.300:FF:000106">
    <property type="entry name" value="Adenylate kinase mitochondrial"/>
    <property type="match status" value="1"/>
</dbReference>
<dbReference type="Gene3D" id="3.40.50.300">
    <property type="entry name" value="P-loop containing nucleotide triphosphate hydrolases"/>
    <property type="match status" value="1"/>
</dbReference>
<dbReference type="HAMAP" id="MF_00235">
    <property type="entry name" value="Adenylate_kinase_Adk"/>
    <property type="match status" value="1"/>
</dbReference>
<dbReference type="HAMAP" id="MF_03168">
    <property type="entry name" value="Adenylate_kinase_AK2"/>
    <property type="match status" value="1"/>
</dbReference>
<dbReference type="InterPro" id="IPR006259">
    <property type="entry name" value="Adenyl_kin_sub"/>
</dbReference>
<dbReference type="InterPro" id="IPR000850">
    <property type="entry name" value="Adenylat/UMP-CMP_kin"/>
</dbReference>
<dbReference type="InterPro" id="IPR033690">
    <property type="entry name" value="Adenylat_kinase_CS"/>
</dbReference>
<dbReference type="InterPro" id="IPR007862">
    <property type="entry name" value="Adenylate_kinase_lid-dom"/>
</dbReference>
<dbReference type="InterPro" id="IPR036193">
    <property type="entry name" value="ADK_active_lid_dom_sf"/>
</dbReference>
<dbReference type="InterPro" id="IPR028587">
    <property type="entry name" value="AK2"/>
</dbReference>
<dbReference type="InterPro" id="IPR027417">
    <property type="entry name" value="P-loop_NTPase"/>
</dbReference>
<dbReference type="NCBIfam" id="TIGR01351">
    <property type="entry name" value="adk"/>
    <property type="match status" value="1"/>
</dbReference>
<dbReference type="NCBIfam" id="NF001380">
    <property type="entry name" value="PRK00279.1-2"/>
    <property type="match status" value="1"/>
</dbReference>
<dbReference type="NCBIfam" id="NF001381">
    <property type="entry name" value="PRK00279.1-3"/>
    <property type="match status" value="1"/>
</dbReference>
<dbReference type="NCBIfam" id="NF011100">
    <property type="entry name" value="PRK14527.1"/>
    <property type="match status" value="1"/>
</dbReference>
<dbReference type="PANTHER" id="PTHR23359">
    <property type="entry name" value="NUCLEOTIDE KINASE"/>
    <property type="match status" value="1"/>
</dbReference>
<dbReference type="Pfam" id="PF00406">
    <property type="entry name" value="ADK"/>
    <property type="match status" value="1"/>
</dbReference>
<dbReference type="Pfam" id="PF05191">
    <property type="entry name" value="ADK_lid"/>
    <property type="match status" value="1"/>
</dbReference>
<dbReference type="PRINTS" id="PR00094">
    <property type="entry name" value="ADENYLTKNASE"/>
</dbReference>
<dbReference type="SUPFAM" id="SSF57774">
    <property type="entry name" value="Microbial and mitochondrial ADK, insert 'zinc finger' domain"/>
    <property type="match status" value="1"/>
</dbReference>
<dbReference type="SUPFAM" id="SSF52540">
    <property type="entry name" value="P-loop containing nucleoside triphosphate hydrolases"/>
    <property type="match status" value="1"/>
</dbReference>
<dbReference type="PROSITE" id="PS00113">
    <property type="entry name" value="ADENYLATE_KINASE"/>
    <property type="match status" value="1"/>
</dbReference>
<gene>
    <name evidence="1" type="primary">ADK1</name>
    <name type="ORF">Kpol_1031p54</name>
</gene>
<sequence>MSQNSESIRMVLIGPPGAGKGTQAPNLVKQFGAAHLSTGDMLRSQVAKGTPLGVEAKKIMDQGGLVSDEIMVGMIKQELETNPACGKGFILDGFPRTIPQAEKLDQMLAERGTPLEKAVELKVDDELLVARITGRLVHPSSGRSYHKLFNPPKVEMTDDVTGEPLVQRSDDNAEALMKRLNSYHQQTEPIVEFYKKTGIWAGVDASQAPDNVWTSILKVLGKN</sequence>
<accession>A7THY5</accession>
<keyword id="KW-0067">ATP-binding</keyword>
<keyword id="KW-0963">Cytoplasm</keyword>
<keyword id="KW-0418">Kinase</keyword>
<keyword id="KW-0496">Mitochondrion</keyword>
<keyword id="KW-0547">Nucleotide-binding</keyword>
<keyword id="KW-1185">Reference proteome</keyword>
<keyword id="KW-0808">Transferase</keyword>